<sequence>MGALDDLRVLDLTQVLAGPYCTMLLADMGADVVKVERPGGDLIRSNPPFVSDGDEEAYGGYFQSVNRGKRSLELNLGTDEDREAFLSLVERADVVVENFKAGTMEKFDCGYETLREHNPDLIYSSIRGFGDPRTGETHRQGQPSFDLIAQALGGVMEITGQSDGPPTKVGPGVGDLFTAVLNAVGILAAVHHRERTGEGQYVDTAMYDSMVSLCERTVYQYSCDGESPTRQGNSHPTLFPYDSFEAADGHVVIAAFADGHWEALCEAMERPDLAAEYPDAGSRIANRESLRAEIAEWTTAIDSETLLDLLEGRVPAAPVQNTADIFDDPHIHDREMLAEVDQPGADDQMTIAGSPIKMTETMPSPGGRAPLLDEHKTELLDEAGVDTGTNRVESDD</sequence>
<feature type="chain" id="PRO_0000429369" description="Succinyl-CoA:mesaconate CoA-transferase">
    <location>
        <begin position="1"/>
        <end position="396"/>
    </location>
</feature>
<feature type="active site" description="Nucleophile" evidence="1">
    <location>
        <position position="175"/>
    </location>
</feature>
<gene>
    <name evidence="3" type="primary">mct</name>
    <name type="ordered locus">rrnAC0683</name>
</gene>
<accession>Q5V468</accession>
<organism>
    <name type="scientific">Haloarcula marismortui (strain ATCC 43049 / DSM 3752 / JCM 8966 / VKM B-1809)</name>
    <name type="common">Halobacterium marismortui</name>
    <dbReference type="NCBI Taxonomy" id="272569"/>
    <lineage>
        <taxon>Archaea</taxon>
        <taxon>Methanobacteriati</taxon>
        <taxon>Methanobacteriota</taxon>
        <taxon>Stenosarchaea group</taxon>
        <taxon>Halobacteria</taxon>
        <taxon>Halobacteriales</taxon>
        <taxon>Haloarculaceae</taxon>
        <taxon>Haloarcula</taxon>
    </lineage>
</organism>
<evidence type="ECO:0000250" key="1">
    <source>
        <dbReference type="UniProtKB" id="P69902"/>
    </source>
</evidence>
<evidence type="ECO:0000269" key="2">
    <source>
    </source>
</evidence>
<evidence type="ECO:0000303" key="3">
    <source>
    </source>
</evidence>
<evidence type="ECO:0000305" key="4"/>
<evidence type="ECO:0000305" key="5">
    <source>
    </source>
</evidence>
<dbReference type="EC" id="2.8.3.26" evidence="5"/>
<dbReference type="EMBL" id="AY596297">
    <property type="protein sequence ID" value="AAV45684.1"/>
    <property type="status" value="ALT_INIT"/>
    <property type="molecule type" value="Genomic_DNA"/>
</dbReference>
<dbReference type="RefSeq" id="WP_049938816.1">
    <property type="nucleotide sequence ID" value="NC_006396.1"/>
</dbReference>
<dbReference type="SMR" id="Q5V468"/>
<dbReference type="STRING" id="272569.rrnAC0683"/>
<dbReference type="PaxDb" id="272569-rrnAC0683"/>
<dbReference type="EnsemblBacteria" id="AAV45684">
    <property type="protein sequence ID" value="AAV45684"/>
    <property type="gene ID" value="rrnAC0683"/>
</dbReference>
<dbReference type="GeneID" id="40151723"/>
<dbReference type="KEGG" id="hma:rrnAC0683"/>
<dbReference type="PATRIC" id="fig|272569.17.peg.1433"/>
<dbReference type="eggNOG" id="arCOG02304">
    <property type="taxonomic scope" value="Archaea"/>
</dbReference>
<dbReference type="HOGENOM" id="CLU_033975_0_0_2"/>
<dbReference type="BioCyc" id="MetaCyc:MONOMER-16256"/>
<dbReference type="Proteomes" id="UP000001169">
    <property type="component" value="Chromosome I"/>
</dbReference>
<dbReference type="GO" id="GO:0008410">
    <property type="term" value="F:CoA-transferase activity"/>
    <property type="evidence" value="ECO:0007669"/>
    <property type="project" value="TreeGrafter"/>
</dbReference>
<dbReference type="Gene3D" id="3.40.50.10540">
    <property type="entry name" value="Crotonobetainyl-coa:carnitine coa-transferase, domain 1"/>
    <property type="match status" value="1"/>
</dbReference>
<dbReference type="Gene3D" id="3.30.1540.10">
    <property type="entry name" value="formyl-coa transferase, domain 3"/>
    <property type="match status" value="1"/>
</dbReference>
<dbReference type="InterPro" id="IPR050483">
    <property type="entry name" value="CoA-transferase_III_domain"/>
</dbReference>
<dbReference type="InterPro" id="IPR003673">
    <property type="entry name" value="CoA-Trfase_fam_III"/>
</dbReference>
<dbReference type="InterPro" id="IPR044855">
    <property type="entry name" value="CoA-Trfase_III_dom3_sf"/>
</dbReference>
<dbReference type="InterPro" id="IPR023606">
    <property type="entry name" value="CoA-Trfase_III_dom_1_sf"/>
</dbReference>
<dbReference type="InterPro" id="IPR054905">
    <property type="entry name" value="Scnl_mescCoAtase"/>
</dbReference>
<dbReference type="NCBIfam" id="NF041294">
    <property type="entry name" value="Scnl_mescCoAtase"/>
    <property type="match status" value="1"/>
</dbReference>
<dbReference type="PANTHER" id="PTHR48207">
    <property type="entry name" value="SUCCINATE--HYDROXYMETHYLGLUTARATE COA-TRANSFERASE"/>
    <property type="match status" value="1"/>
</dbReference>
<dbReference type="PANTHER" id="PTHR48207:SF3">
    <property type="entry name" value="SUCCINATE--HYDROXYMETHYLGLUTARATE COA-TRANSFERASE"/>
    <property type="match status" value="1"/>
</dbReference>
<dbReference type="Pfam" id="PF02515">
    <property type="entry name" value="CoA_transf_3"/>
    <property type="match status" value="1"/>
</dbReference>
<dbReference type="SUPFAM" id="SSF89796">
    <property type="entry name" value="CoA-transferase family III (CaiB/BaiF)"/>
    <property type="match status" value="1"/>
</dbReference>
<comment type="function">
    <text evidence="2">Involved in the methylaspartate cycle. Catalyzes the transfer of the CoA moiety from succinyl-CoA to mesaconate to generate mesaconyl-CoA (2-methylfumaryl-CoA) and succinate.</text>
</comment>
<comment type="catalytic activity">
    <reaction evidence="5">
        <text>mesaconate + succinyl-CoA = 2-methylfumaryl-CoA + succinate</text>
        <dbReference type="Rhea" id="RHEA:45820"/>
        <dbReference type="ChEBI" id="CHEBI:30031"/>
        <dbReference type="ChEBI" id="CHEBI:36986"/>
        <dbReference type="ChEBI" id="CHEBI:57292"/>
        <dbReference type="ChEBI" id="CHEBI:75635"/>
        <dbReference type="EC" id="2.8.3.26"/>
    </reaction>
    <physiologicalReaction direction="left-to-right" evidence="5">
        <dbReference type="Rhea" id="RHEA:45821"/>
    </physiologicalReaction>
</comment>
<comment type="similarity">
    <text evidence="4">Belongs to the CoA-transferase III family.</text>
</comment>
<comment type="sequence caution" evidence="4">
    <conflict type="erroneous initiation">
        <sequence resource="EMBL-CDS" id="AAV45684"/>
    </conflict>
    <text>Extended N-terminus.</text>
</comment>
<keyword id="KW-1185">Reference proteome</keyword>
<keyword id="KW-0808">Transferase</keyword>
<proteinExistence type="evidence at protein level"/>
<reference key="1">
    <citation type="journal article" date="2004" name="Genome Res.">
        <title>Genome sequence of Haloarcula marismortui: a halophilic archaeon from the Dead Sea.</title>
        <authorList>
            <person name="Baliga N.S."/>
            <person name="Bonneau R."/>
            <person name="Facciotti M.T."/>
            <person name="Pan M."/>
            <person name="Glusman G."/>
            <person name="Deutsch E.W."/>
            <person name="Shannon P."/>
            <person name="Chiu Y."/>
            <person name="Weng R.S."/>
            <person name="Gan R.R."/>
            <person name="Hung P."/>
            <person name="Date S.V."/>
            <person name="Marcotte E."/>
            <person name="Hood L."/>
            <person name="Ng W.V."/>
        </authorList>
    </citation>
    <scope>NUCLEOTIDE SEQUENCE [LARGE SCALE GENOMIC DNA]</scope>
    <source>
        <strain>ATCC 43049 / DSM 3752 / JCM 8966 / VKM B-1809</strain>
    </source>
</reference>
<reference key="2">
    <citation type="journal article" date="2011" name="Science">
        <title>A methylaspartate cycle in haloarchaea.</title>
        <authorList>
            <person name="Khomyakova M."/>
            <person name="Bukmez O."/>
            <person name="Thomas L.K."/>
            <person name="Erb T.J."/>
            <person name="Berg I.A."/>
        </authorList>
    </citation>
    <scope>FUNCTION</scope>
    <scope>CATALYTIC ACTIVITY</scope>
    <source>
        <strain>ATCC 43049 / DSM 3752 / JCM 8966 / VKM B-1809</strain>
    </source>
</reference>
<name>MCT_HALMA</name>
<protein>
    <recommendedName>
        <fullName evidence="3">Succinyl-CoA:mesaconate CoA-transferase</fullName>
        <ecNumber evidence="5">2.8.3.26</ecNumber>
    </recommendedName>
</protein>